<dbReference type="EMBL" id="CR940347">
    <property type="protein sequence ID" value="CAI73131.1"/>
    <property type="molecule type" value="Genomic_DNA"/>
</dbReference>
<dbReference type="RefSeq" id="XP_953809.1">
    <property type="nucleotide sequence ID" value="XM_948716.1"/>
</dbReference>
<dbReference type="SMR" id="Q4UIF8"/>
<dbReference type="FunCoup" id="Q4UIF8">
    <property type="interactions" value="402"/>
</dbReference>
<dbReference type="STRING" id="5874.Q4UIF8"/>
<dbReference type="GeneID" id="3863476"/>
<dbReference type="KEGG" id="tan:TA06650"/>
<dbReference type="VEuPathDB" id="PiroplasmaDB:TA06650"/>
<dbReference type="eggNOG" id="KOG3436">
    <property type="taxonomic scope" value="Eukaryota"/>
</dbReference>
<dbReference type="InParanoid" id="Q4UIF8"/>
<dbReference type="OMA" id="VMNQKAR"/>
<dbReference type="OrthoDB" id="528635at2759"/>
<dbReference type="Proteomes" id="UP000001950">
    <property type="component" value="Chromosome 1 part 1"/>
</dbReference>
<dbReference type="GO" id="GO:0022625">
    <property type="term" value="C:cytosolic large ribosomal subunit"/>
    <property type="evidence" value="ECO:0007669"/>
    <property type="project" value="InterPro"/>
</dbReference>
<dbReference type="GO" id="GO:0003729">
    <property type="term" value="F:mRNA binding"/>
    <property type="evidence" value="ECO:0007669"/>
    <property type="project" value="TreeGrafter"/>
</dbReference>
<dbReference type="GO" id="GO:0003735">
    <property type="term" value="F:structural constituent of ribosome"/>
    <property type="evidence" value="ECO:0007669"/>
    <property type="project" value="InterPro"/>
</dbReference>
<dbReference type="GO" id="GO:0000463">
    <property type="term" value="P:maturation of LSU-rRNA from tricistronic rRNA transcript (SSU-rRNA, 5.8S rRNA, LSU-rRNA)"/>
    <property type="evidence" value="ECO:0007669"/>
    <property type="project" value="InterPro"/>
</dbReference>
<dbReference type="GO" id="GO:0006412">
    <property type="term" value="P:translation"/>
    <property type="evidence" value="ECO:0007669"/>
    <property type="project" value="InterPro"/>
</dbReference>
<dbReference type="FunFam" id="1.10.287.310:FF:000002">
    <property type="entry name" value="60S ribosomal protein L35"/>
    <property type="match status" value="1"/>
</dbReference>
<dbReference type="Gene3D" id="1.10.287.310">
    <property type="match status" value="1"/>
</dbReference>
<dbReference type="Gene3D" id="6.10.250.3450">
    <property type="match status" value="1"/>
</dbReference>
<dbReference type="HAMAP" id="MF_00374">
    <property type="entry name" value="Ribosomal_uL29"/>
    <property type="match status" value="1"/>
</dbReference>
<dbReference type="InterPro" id="IPR001854">
    <property type="entry name" value="Ribosomal_uL29"/>
</dbReference>
<dbReference type="InterPro" id="IPR045059">
    <property type="entry name" value="Ribosomal_uL29_euk"/>
</dbReference>
<dbReference type="InterPro" id="IPR036049">
    <property type="entry name" value="Ribosomal_uL29_sf"/>
</dbReference>
<dbReference type="NCBIfam" id="TIGR00012">
    <property type="entry name" value="L29"/>
    <property type="match status" value="1"/>
</dbReference>
<dbReference type="PANTHER" id="PTHR45722">
    <property type="entry name" value="60S RIBOSOMAL PROTEIN L35"/>
    <property type="match status" value="1"/>
</dbReference>
<dbReference type="PANTHER" id="PTHR45722:SF2">
    <property type="entry name" value="LARGE RIBOSOMAL SUBUNIT PROTEIN UL29-RELATED"/>
    <property type="match status" value="1"/>
</dbReference>
<dbReference type="Pfam" id="PF00831">
    <property type="entry name" value="Ribosomal_L29"/>
    <property type="match status" value="1"/>
</dbReference>
<dbReference type="SUPFAM" id="SSF46561">
    <property type="entry name" value="Ribosomal protein L29 (L29p)"/>
    <property type="match status" value="1"/>
</dbReference>
<name>RL35_THEAN</name>
<proteinExistence type="inferred from homology"/>
<accession>Q4UIF8</accession>
<organism>
    <name type="scientific">Theileria annulata</name>
    <dbReference type="NCBI Taxonomy" id="5874"/>
    <lineage>
        <taxon>Eukaryota</taxon>
        <taxon>Sar</taxon>
        <taxon>Alveolata</taxon>
        <taxon>Apicomplexa</taxon>
        <taxon>Aconoidasida</taxon>
        <taxon>Piroplasmida</taxon>
        <taxon>Theileriidae</taxon>
        <taxon>Theileria</taxon>
    </lineage>
</organism>
<reference key="1">
    <citation type="journal article" date="2005" name="Science">
        <title>Genome of the host-cell transforming parasite Theileria annulata compared with T. parva.</title>
        <authorList>
            <person name="Pain A."/>
            <person name="Renauld H."/>
            <person name="Berriman M."/>
            <person name="Murphy L."/>
            <person name="Yeats C.A."/>
            <person name="Weir W."/>
            <person name="Kerhornou A."/>
            <person name="Aslett M."/>
            <person name="Bishop R."/>
            <person name="Bouchier C."/>
            <person name="Cochet M."/>
            <person name="Coulson R.M.R."/>
            <person name="Cronin A."/>
            <person name="de Villiers E.P."/>
            <person name="Fraser A."/>
            <person name="Fosker N."/>
            <person name="Gardner M."/>
            <person name="Goble A."/>
            <person name="Griffiths-Jones S."/>
            <person name="Harris D.E."/>
            <person name="Katzer F."/>
            <person name="Larke N."/>
            <person name="Lord A."/>
            <person name="Maser P."/>
            <person name="McKellar S."/>
            <person name="Mooney P."/>
            <person name="Morton F."/>
            <person name="Nene V."/>
            <person name="O'Neil S."/>
            <person name="Price C."/>
            <person name="Quail M.A."/>
            <person name="Rabbinowitsch E."/>
            <person name="Rawlings N.D."/>
            <person name="Rutter S."/>
            <person name="Saunders D."/>
            <person name="Seeger K."/>
            <person name="Shah T."/>
            <person name="Squares R."/>
            <person name="Squares S."/>
            <person name="Tivey A."/>
            <person name="Walker A.R."/>
            <person name="Woodward J."/>
            <person name="Dobbelaere D.A.E."/>
            <person name="Langsley G."/>
            <person name="Rajandream M.A."/>
            <person name="McKeever D."/>
            <person name="Shiels B."/>
            <person name="Tait A."/>
            <person name="Barrell B.G."/>
            <person name="Hall N."/>
        </authorList>
    </citation>
    <scope>NUCLEOTIDE SEQUENCE [LARGE SCALE GENOMIC DNA]</scope>
    <source>
        <strain>Ankara</strain>
    </source>
</reference>
<comment type="similarity">
    <text evidence="1">Belongs to the universal ribosomal protein uL29 family.</text>
</comment>
<protein>
    <recommendedName>
        <fullName evidence="1">Large ribosomal subunit protein uL29</fullName>
    </recommendedName>
    <alternativeName>
        <fullName>60S ribosomal protein L35</fullName>
    </alternativeName>
</protein>
<feature type="chain" id="PRO_0000232712" description="Large ribosomal subunit protein uL29">
    <location>
        <begin position="1"/>
        <end position="142"/>
    </location>
</feature>
<keyword id="KW-1185">Reference proteome</keyword>
<keyword id="KW-0687">Ribonucleoprotein</keyword>
<keyword id="KW-0689">Ribosomal protein</keyword>
<sequence length="142" mass="16598">MEIVINNVKNFSKWTLHNFTEKLRVFELRDKSDAELLKLLDDLKQELATFRVSKVTATGTSKLSKITLVRKAVAKVLTVYNQRKKEEARKKYKKLSKTPLNLRPKLTRAKRKGLTTKQLTMKTIKERKRAENLPKRKYALLA</sequence>
<evidence type="ECO:0000305" key="1"/>
<gene>
    <name type="primary">RPL35</name>
    <name type="ORF">TA06650</name>
</gene>